<accession>B1Z8U3</accession>
<proteinExistence type="inferred from homology"/>
<name>RSMH_METPB</name>
<dbReference type="EC" id="2.1.1.199" evidence="1"/>
<dbReference type="EMBL" id="CP001029">
    <property type="protein sequence ID" value="ACB83274.1"/>
    <property type="molecule type" value="Genomic_DNA"/>
</dbReference>
<dbReference type="RefSeq" id="WP_012456870.1">
    <property type="nucleotide sequence ID" value="NC_010725.1"/>
</dbReference>
<dbReference type="SMR" id="B1Z8U3"/>
<dbReference type="STRING" id="441620.Mpop_5180"/>
<dbReference type="KEGG" id="mpo:Mpop_5180"/>
<dbReference type="eggNOG" id="COG0275">
    <property type="taxonomic scope" value="Bacteria"/>
</dbReference>
<dbReference type="HOGENOM" id="CLU_038422_1_1_5"/>
<dbReference type="OrthoDB" id="9806637at2"/>
<dbReference type="Proteomes" id="UP000007136">
    <property type="component" value="Chromosome"/>
</dbReference>
<dbReference type="GO" id="GO:0005737">
    <property type="term" value="C:cytoplasm"/>
    <property type="evidence" value="ECO:0007669"/>
    <property type="project" value="UniProtKB-SubCell"/>
</dbReference>
<dbReference type="GO" id="GO:0071424">
    <property type="term" value="F:rRNA (cytosine-N4-)-methyltransferase activity"/>
    <property type="evidence" value="ECO:0007669"/>
    <property type="project" value="UniProtKB-UniRule"/>
</dbReference>
<dbReference type="GO" id="GO:0070475">
    <property type="term" value="P:rRNA base methylation"/>
    <property type="evidence" value="ECO:0007669"/>
    <property type="project" value="UniProtKB-UniRule"/>
</dbReference>
<dbReference type="Gene3D" id="1.10.150.170">
    <property type="entry name" value="Putative methyltransferase TM0872, insert domain"/>
    <property type="match status" value="1"/>
</dbReference>
<dbReference type="Gene3D" id="3.40.50.150">
    <property type="entry name" value="Vaccinia Virus protein VP39"/>
    <property type="match status" value="1"/>
</dbReference>
<dbReference type="HAMAP" id="MF_01007">
    <property type="entry name" value="16SrRNA_methyltr_H"/>
    <property type="match status" value="1"/>
</dbReference>
<dbReference type="InterPro" id="IPR002903">
    <property type="entry name" value="RsmH"/>
</dbReference>
<dbReference type="InterPro" id="IPR023397">
    <property type="entry name" value="SAM-dep_MeTrfase_MraW_recog"/>
</dbReference>
<dbReference type="InterPro" id="IPR029063">
    <property type="entry name" value="SAM-dependent_MTases_sf"/>
</dbReference>
<dbReference type="NCBIfam" id="TIGR00006">
    <property type="entry name" value="16S rRNA (cytosine(1402)-N(4))-methyltransferase RsmH"/>
    <property type="match status" value="1"/>
</dbReference>
<dbReference type="PANTHER" id="PTHR11265:SF0">
    <property type="entry name" value="12S RRNA N4-METHYLCYTIDINE METHYLTRANSFERASE"/>
    <property type="match status" value="1"/>
</dbReference>
<dbReference type="PANTHER" id="PTHR11265">
    <property type="entry name" value="S-ADENOSYL-METHYLTRANSFERASE MRAW"/>
    <property type="match status" value="1"/>
</dbReference>
<dbReference type="Pfam" id="PF01795">
    <property type="entry name" value="Methyltransf_5"/>
    <property type="match status" value="1"/>
</dbReference>
<dbReference type="PIRSF" id="PIRSF004486">
    <property type="entry name" value="MraW"/>
    <property type="match status" value="1"/>
</dbReference>
<dbReference type="SUPFAM" id="SSF81799">
    <property type="entry name" value="Putative methyltransferase TM0872, insert domain"/>
    <property type="match status" value="1"/>
</dbReference>
<dbReference type="SUPFAM" id="SSF53335">
    <property type="entry name" value="S-adenosyl-L-methionine-dependent methyltransferases"/>
    <property type="match status" value="1"/>
</dbReference>
<reference key="1">
    <citation type="submission" date="2008-04" db="EMBL/GenBank/DDBJ databases">
        <title>Complete sequence of chromosome of Methylobacterium populi BJ001.</title>
        <authorList>
            <consortium name="US DOE Joint Genome Institute"/>
            <person name="Copeland A."/>
            <person name="Lucas S."/>
            <person name="Lapidus A."/>
            <person name="Glavina del Rio T."/>
            <person name="Dalin E."/>
            <person name="Tice H."/>
            <person name="Bruce D."/>
            <person name="Goodwin L."/>
            <person name="Pitluck S."/>
            <person name="Chertkov O."/>
            <person name="Brettin T."/>
            <person name="Detter J.C."/>
            <person name="Han C."/>
            <person name="Kuske C.R."/>
            <person name="Schmutz J."/>
            <person name="Larimer F."/>
            <person name="Land M."/>
            <person name="Hauser L."/>
            <person name="Kyrpides N."/>
            <person name="Mikhailova N."/>
            <person name="Marx C."/>
            <person name="Richardson P."/>
        </authorList>
    </citation>
    <scope>NUCLEOTIDE SEQUENCE [LARGE SCALE GENOMIC DNA]</scope>
    <source>
        <strain>ATCC BAA-705 / NCIMB 13946 / BJ001</strain>
    </source>
</reference>
<evidence type="ECO:0000255" key="1">
    <source>
        <dbReference type="HAMAP-Rule" id="MF_01007"/>
    </source>
</evidence>
<evidence type="ECO:0000256" key="2">
    <source>
        <dbReference type="SAM" id="MobiDB-lite"/>
    </source>
</evidence>
<comment type="function">
    <text evidence="1">Specifically methylates the N4 position of cytidine in position 1402 (C1402) of 16S rRNA.</text>
</comment>
<comment type="catalytic activity">
    <reaction evidence="1">
        <text>cytidine(1402) in 16S rRNA + S-adenosyl-L-methionine = N(4)-methylcytidine(1402) in 16S rRNA + S-adenosyl-L-homocysteine + H(+)</text>
        <dbReference type="Rhea" id="RHEA:42928"/>
        <dbReference type="Rhea" id="RHEA-COMP:10286"/>
        <dbReference type="Rhea" id="RHEA-COMP:10287"/>
        <dbReference type="ChEBI" id="CHEBI:15378"/>
        <dbReference type="ChEBI" id="CHEBI:57856"/>
        <dbReference type="ChEBI" id="CHEBI:59789"/>
        <dbReference type="ChEBI" id="CHEBI:74506"/>
        <dbReference type="ChEBI" id="CHEBI:82748"/>
        <dbReference type="EC" id="2.1.1.199"/>
    </reaction>
</comment>
<comment type="subcellular location">
    <subcellularLocation>
        <location evidence="1">Cytoplasm</location>
    </subcellularLocation>
</comment>
<comment type="similarity">
    <text evidence="1">Belongs to the methyltransferase superfamily. RsmH family.</text>
</comment>
<sequence length="351" mass="37330">MSRAPRTAKGETARAEPARHVPVLLAEVLAALALDRPGLAVDGTFGAGGYTRALLESGPDMRVIAIDRDPTAIRAGADLVEGAGGRLRLVQGRFGDLDTLLADQGEAQADWVVLDIGVSSMQLDEAHRGFSFRQDGPLDMRMGGEGPSAADLVNGEEESTLADILYHFGEERRSRAVARAIVEARRRAPIATTAQLADLIAGVVRPEPGSPIHPATRSFQGLRIAVNDELGELVRGLHAAERVLKPGGRLAVVTFHSLEDRIVKQFFSARSGRAAQASRHLPGVERPAPKSFRLVTKGPVLPSEAETEVNPRARSAKLRAGERTDGPAPPPLSAIETLASLPAPQGRGTRR</sequence>
<protein>
    <recommendedName>
        <fullName evidence="1">Ribosomal RNA small subunit methyltransferase H</fullName>
        <ecNumber evidence="1">2.1.1.199</ecNumber>
    </recommendedName>
    <alternativeName>
        <fullName evidence="1">16S rRNA m(4)C1402 methyltransferase</fullName>
    </alternativeName>
    <alternativeName>
        <fullName evidence="1">rRNA (cytosine-N(4)-)-methyltransferase RsmH</fullName>
    </alternativeName>
</protein>
<keyword id="KW-0963">Cytoplasm</keyword>
<keyword id="KW-0489">Methyltransferase</keyword>
<keyword id="KW-0698">rRNA processing</keyword>
<keyword id="KW-0949">S-adenosyl-L-methionine</keyword>
<keyword id="KW-0808">Transferase</keyword>
<organism>
    <name type="scientific">Methylorubrum populi (strain ATCC BAA-705 / NCIMB 13946 / BJ001)</name>
    <name type="common">Methylobacterium populi</name>
    <dbReference type="NCBI Taxonomy" id="441620"/>
    <lineage>
        <taxon>Bacteria</taxon>
        <taxon>Pseudomonadati</taxon>
        <taxon>Pseudomonadota</taxon>
        <taxon>Alphaproteobacteria</taxon>
        <taxon>Hyphomicrobiales</taxon>
        <taxon>Methylobacteriaceae</taxon>
        <taxon>Methylorubrum</taxon>
    </lineage>
</organism>
<feature type="chain" id="PRO_0000386977" description="Ribosomal RNA small subunit methyltransferase H">
    <location>
        <begin position="1"/>
        <end position="351"/>
    </location>
</feature>
<feature type="region of interest" description="Disordered" evidence="2">
    <location>
        <begin position="298"/>
        <end position="351"/>
    </location>
</feature>
<feature type="binding site" evidence="1">
    <location>
        <begin position="48"/>
        <end position="50"/>
    </location>
    <ligand>
        <name>S-adenosyl-L-methionine</name>
        <dbReference type="ChEBI" id="CHEBI:59789"/>
    </ligand>
</feature>
<feature type="binding site" evidence="1">
    <location>
        <position position="67"/>
    </location>
    <ligand>
        <name>S-adenosyl-L-methionine</name>
        <dbReference type="ChEBI" id="CHEBI:59789"/>
    </ligand>
</feature>
<feature type="binding site" evidence="1">
    <location>
        <position position="94"/>
    </location>
    <ligand>
        <name>S-adenosyl-L-methionine</name>
        <dbReference type="ChEBI" id="CHEBI:59789"/>
    </ligand>
</feature>
<feature type="binding site" evidence="1">
    <location>
        <position position="115"/>
    </location>
    <ligand>
        <name>S-adenosyl-L-methionine</name>
        <dbReference type="ChEBI" id="CHEBI:59789"/>
    </ligand>
</feature>
<feature type="binding site" evidence="1">
    <location>
        <position position="122"/>
    </location>
    <ligand>
        <name>S-adenosyl-L-methionine</name>
        <dbReference type="ChEBI" id="CHEBI:59789"/>
    </ligand>
</feature>
<gene>
    <name evidence="1" type="primary">rsmH</name>
    <name type="synonym">mraW</name>
    <name type="ordered locus">Mpop_5180</name>
</gene>